<dbReference type="EC" id="2.1.1.-"/>
<dbReference type="EMBL" id="AY653733">
    <property type="protein sequence ID" value="AAV50674.1"/>
    <property type="molecule type" value="Genomic_DNA"/>
</dbReference>
<dbReference type="SMR" id="Q5UQK3"/>
<dbReference type="KEGG" id="vg:9925026"/>
<dbReference type="OrthoDB" id="9553at10239"/>
<dbReference type="Proteomes" id="UP000001134">
    <property type="component" value="Genome"/>
</dbReference>
<dbReference type="GO" id="GO:0003723">
    <property type="term" value="F:RNA binding"/>
    <property type="evidence" value="ECO:0007669"/>
    <property type="project" value="TreeGrafter"/>
</dbReference>
<dbReference type="GO" id="GO:0008173">
    <property type="term" value="F:RNA methyltransferase activity"/>
    <property type="evidence" value="ECO:0007669"/>
    <property type="project" value="InterPro"/>
</dbReference>
<dbReference type="GO" id="GO:0032259">
    <property type="term" value="P:methylation"/>
    <property type="evidence" value="ECO:0007669"/>
    <property type="project" value="UniProtKB-KW"/>
</dbReference>
<dbReference type="GO" id="GO:0006396">
    <property type="term" value="P:RNA processing"/>
    <property type="evidence" value="ECO:0007669"/>
    <property type="project" value="InterPro"/>
</dbReference>
<dbReference type="CDD" id="cd02440">
    <property type="entry name" value="AdoMet_MTases"/>
    <property type="match status" value="1"/>
</dbReference>
<dbReference type="Gene3D" id="2.40.50.1070">
    <property type="match status" value="1"/>
</dbReference>
<dbReference type="Gene3D" id="3.40.50.150">
    <property type="entry name" value="Vaccinia Virus protein VP39"/>
    <property type="match status" value="1"/>
</dbReference>
<dbReference type="InterPro" id="IPR030390">
    <property type="entry name" value="MeTrfase_TrmA_AS"/>
</dbReference>
<dbReference type="InterPro" id="IPR029063">
    <property type="entry name" value="SAM-dependent_MTases_sf"/>
</dbReference>
<dbReference type="InterPro" id="IPR045850">
    <property type="entry name" value="TRM2_met"/>
</dbReference>
<dbReference type="InterPro" id="IPR010280">
    <property type="entry name" value="U5_MeTrfase_fam"/>
</dbReference>
<dbReference type="PANTHER" id="PTHR45904">
    <property type="entry name" value="TRNA (URACIL-5-)-METHYLTRANSFERASE"/>
    <property type="match status" value="1"/>
</dbReference>
<dbReference type="PANTHER" id="PTHR45904:SF2">
    <property type="entry name" value="TRNA (URACIL-5-)-METHYLTRANSFERASE HOMOLOG A"/>
    <property type="match status" value="1"/>
</dbReference>
<dbReference type="Pfam" id="PF05958">
    <property type="entry name" value="tRNA_U5-meth_tr"/>
    <property type="match status" value="1"/>
</dbReference>
<dbReference type="SUPFAM" id="SSF53335">
    <property type="entry name" value="S-adenosyl-L-methionine-dependent methyltransferases"/>
    <property type="match status" value="1"/>
</dbReference>
<dbReference type="PROSITE" id="PS51687">
    <property type="entry name" value="SAM_MT_RNA_M5U"/>
    <property type="match status" value="1"/>
</dbReference>
<dbReference type="PROSITE" id="PS01230">
    <property type="entry name" value="TRMA_1"/>
    <property type="match status" value="1"/>
</dbReference>
<gene>
    <name type="ordered locus">MIMI_R405</name>
</gene>
<feature type="chain" id="PRO_0000162061" description="Putative RNA methyltransferase R405">
    <location>
        <begin position="1"/>
        <end position="389"/>
    </location>
</feature>
<feature type="active site" description="Nucleophile" evidence="1">
    <location>
        <position position="342"/>
    </location>
</feature>
<feature type="binding site" evidence="1">
    <location>
        <position position="207"/>
    </location>
    <ligand>
        <name>S-adenosyl-L-methionine</name>
        <dbReference type="ChEBI" id="CHEBI:59789"/>
    </ligand>
</feature>
<feature type="binding site" evidence="1">
    <location>
        <position position="261"/>
    </location>
    <ligand>
        <name>S-adenosyl-L-methionine</name>
        <dbReference type="ChEBI" id="CHEBI:59789"/>
    </ligand>
</feature>
<feature type="binding site" evidence="1">
    <location>
        <position position="314"/>
    </location>
    <ligand>
        <name>S-adenosyl-L-methionine</name>
        <dbReference type="ChEBI" id="CHEBI:59789"/>
    </ligand>
</feature>
<organismHost>
    <name type="scientific">Acanthamoeba polyphaga</name>
    <name type="common">Amoeba</name>
    <dbReference type="NCBI Taxonomy" id="5757"/>
</organismHost>
<organism>
    <name type="scientific">Acanthamoeba polyphaga mimivirus</name>
    <name type="common">APMV</name>
    <dbReference type="NCBI Taxonomy" id="212035"/>
    <lineage>
        <taxon>Viruses</taxon>
        <taxon>Varidnaviria</taxon>
        <taxon>Bamfordvirae</taxon>
        <taxon>Nucleocytoviricota</taxon>
        <taxon>Megaviricetes</taxon>
        <taxon>Imitervirales</taxon>
        <taxon>Mimiviridae</taxon>
        <taxon>Megamimivirinae</taxon>
        <taxon>Mimivirus</taxon>
        <taxon>Mimivirus bradfordmassiliense</taxon>
    </lineage>
</organism>
<name>YR405_MIMIV</name>
<protein>
    <recommendedName>
        <fullName>Putative RNA methyltransferase R405</fullName>
        <ecNumber>2.1.1.-</ecNumber>
    </recommendedName>
</protein>
<keyword id="KW-0489">Methyltransferase</keyword>
<keyword id="KW-1185">Reference proteome</keyword>
<keyword id="KW-0949">S-adenosyl-L-methionine</keyword>
<keyword id="KW-0808">Transferase</keyword>
<accession>Q5UQK3</accession>
<comment type="similarity">
    <text evidence="1">Belongs to the class I-like SAM-binding methyltransferase superfamily. RNA M5U methyltransferase family.</text>
</comment>
<proteinExistence type="inferred from homology"/>
<sequence length="389" mass="44942">MESINDVSEICLQLVNLNYSDQLDFKLNLIKQYIPNLLTNQVIASPLVDNYRNKLRFDIGLSNHDLITIGYSLPKKKNTHRYVYSSISMKHLHPKMIQIVSKIELFLRTHEQSWYSIKHGETLLPSMTIRTSFHTEDVMIIFKFKGPQNETVINYFSSDIFYEIIESIEINIVIEFSDCRKIVKGHNYIHEKLDDYIFKITDESFFQVNTLATEVLYNKVLELTMKYIKPTGQDILFDLCCGTGTIGIYLSKIFTKVFGIDIKQSSIIDANHNKLLNNIPNIEFICNPIENVLEKLISECLEKNPDSTFFAVVDPPRTGMHGGVQNTINNCPNLEYLIYVSCNVVTFKRDMEILGKQFEAIETICLDLFPHTPHCELIVVLKKIDLSIY</sequence>
<reference key="1">
    <citation type="journal article" date="2004" name="Science">
        <title>The 1.2-megabase genome sequence of Mimivirus.</title>
        <authorList>
            <person name="Raoult D."/>
            <person name="Audic S."/>
            <person name="Robert C."/>
            <person name="Abergel C."/>
            <person name="Renesto P."/>
            <person name="Ogata H."/>
            <person name="La Scola B."/>
            <person name="Susan M."/>
            <person name="Claverie J.-M."/>
        </authorList>
    </citation>
    <scope>NUCLEOTIDE SEQUENCE [LARGE SCALE GENOMIC DNA]</scope>
    <source>
        <strain>Rowbotham-Bradford</strain>
    </source>
</reference>
<evidence type="ECO:0000255" key="1">
    <source>
        <dbReference type="PROSITE-ProRule" id="PRU01024"/>
    </source>
</evidence>